<name>Y2194_PSEA6</name>
<organism>
    <name type="scientific">Pseudoalteromonas atlantica (strain T6c / ATCC BAA-1087)</name>
    <dbReference type="NCBI Taxonomy" id="3042615"/>
    <lineage>
        <taxon>Bacteria</taxon>
        <taxon>Pseudomonadati</taxon>
        <taxon>Pseudomonadota</taxon>
        <taxon>Gammaproteobacteria</taxon>
        <taxon>Alteromonadales</taxon>
        <taxon>Alteromonadaceae</taxon>
        <taxon>Paraglaciecola</taxon>
    </lineage>
</organism>
<gene>
    <name type="ordered locus">Patl_2194</name>
</gene>
<reference key="1">
    <citation type="submission" date="2006-06" db="EMBL/GenBank/DDBJ databases">
        <title>Complete sequence of Pseudoalteromonas atlantica T6c.</title>
        <authorList>
            <consortium name="US DOE Joint Genome Institute"/>
            <person name="Copeland A."/>
            <person name="Lucas S."/>
            <person name="Lapidus A."/>
            <person name="Barry K."/>
            <person name="Detter J.C."/>
            <person name="Glavina del Rio T."/>
            <person name="Hammon N."/>
            <person name="Israni S."/>
            <person name="Dalin E."/>
            <person name="Tice H."/>
            <person name="Pitluck S."/>
            <person name="Saunders E."/>
            <person name="Brettin T."/>
            <person name="Bruce D."/>
            <person name="Han C."/>
            <person name="Tapia R."/>
            <person name="Gilna P."/>
            <person name="Schmutz J."/>
            <person name="Larimer F."/>
            <person name="Land M."/>
            <person name="Hauser L."/>
            <person name="Kyrpides N."/>
            <person name="Kim E."/>
            <person name="Karls A.C."/>
            <person name="Bartlett D."/>
            <person name="Higgins B.P."/>
            <person name="Richardson P."/>
        </authorList>
    </citation>
    <scope>NUCLEOTIDE SEQUENCE [LARGE SCALE GENOMIC DNA]</scope>
    <source>
        <strain>T6c / ATCC BAA-1087</strain>
    </source>
</reference>
<comment type="similarity">
    <text evidence="1">Belongs to the UPF0145 family.</text>
</comment>
<proteinExistence type="inferred from homology"/>
<protein>
    <recommendedName>
        <fullName evidence="1">UPF0145 protein Patl_2194</fullName>
    </recommendedName>
</protein>
<feature type="chain" id="PRO_1000013021" description="UPF0145 protein Patl_2194">
    <location>
        <begin position="1"/>
        <end position="108"/>
    </location>
</feature>
<sequence>MIMTTTPSIEGKKIERYCGIVVGEAVMGANVFRDIFAAIRDVVGGRSGAYEDELTNARQIGFRELEAEARSMGANAVVGIDIDYEVVGKGGSMLMVSISGTAVSCSDL</sequence>
<evidence type="ECO:0000255" key="1">
    <source>
        <dbReference type="HAMAP-Rule" id="MF_00338"/>
    </source>
</evidence>
<accession>Q15TS6</accession>
<dbReference type="EMBL" id="CP000388">
    <property type="protein sequence ID" value="ABG40712.1"/>
    <property type="molecule type" value="Genomic_DNA"/>
</dbReference>
<dbReference type="RefSeq" id="WP_006993363.1">
    <property type="nucleotide sequence ID" value="NC_008228.1"/>
</dbReference>
<dbReference type="SMR" id="Q15TS6"/>
<dbReference type="STRING" id="342610.Patl_2194"/>
<dbReference type="KEGG" id="pat:Patl_2194"/>
<dbReference type="eggNOG" id="COG0393">
    <property type="taxonomic scope" value="Bacteria"/>
</dbReference>
<dbReference type="HOGENOM" id="CLU_117144_3_2_6"/>
<dbReference type="OrthoDB" id="9796448at2"/>
<dbReference type="Proteomes" id="UP000001981">
    <property type="component" value="Chromosome"/>
</dbReference>
<dbReference type="Gene3D" id="3.30.110.70">
    <property type="entry name" value="Hypothetical protein apc22750. Chain B"/>
    <property type="match status" value="1"/>
</dbReference>
<dbReference type="HAMAP" id="MF_00338">
    <property type="entry name" value="UPF0145"/>
    <property type="match status" value="1"/>
</dbReference>
<dbReference type="InterPro" id="IPR035439">
    <property type="entry name" value="UPF0145_dom_sf"/>
</dbReference>
<dbReference type="InterPro" id="IPR002765">
    <property type="entry name" value="UPF0145_YbjQ-like"/>
</dbReference>
<dbReference type="NCBIfam" id="NF002776">
    <property type="entry name" value="PRK02877.1"/>
    <property type="match status" value="1"/>
</dbReference>
<dbReference type="PANTHER" id="PTHR34068">
    <property type="entry name" value="UPF0145 PROTEIN YBJQ"/>
    <property type="match status" value="1"/>
</dbReference>
<dbReference type="PANTHER" id="PTHR34068:SF1">
    <property type="entry name" value="UPF0145 PROTEIN YBJQ"/>
    <property type="match status" value="1"/>
</dbReference>
<dbReference type="Pfam" id="PF01906">
    <property type="entry name" value="YbjQ_1"/>
    <property type="match status" value="1"/>
</dbReference>
<dbReference type="SUPFAM" id="SSF117782">
    <property type="entry name" value="YbjQ-like"/>
    <property type="match status" value="1"/>
</dbReference>